<proteinExistence type="inferred from homology"/>
<gene>
    <name evidence="1" type="primary">clpP</name>
    <name type="ordered locus">PputGB1_1902</name>
</gene>
<sequence>MSRNSYIQQSSDIQAAGGLVPMVIEQSARGERAYDIYSRLLKERVIFLVGPVEDYMANLVVAQMLFLEAENPDKDIHLYINSPGGSVTAGMSIYDTMQFIKPDVSTICIGQACSMGAFLLTAGAKGKRHCLPNSRVMIHQPLGGFQGQATDIQIHAQEILSIKARLNELLAYHTGQDLETIQRDTERDNFMSASRAAEYGLIDSVYDKRQLAS</sequence>
<protein>
    <recommendedName>
        <fullName evidence="1">ATP-dependent Clp protease proteolytic subunit</fullName>
        <ecNumber evidence="1">3.4.21.92</ecNumber>
    </recommendedName>
    <alternativeName>
        <fullName evidence="1">Endopeptidase Clp</fullName>
    </alternativeName>
</protein>
<dbReference type="EC" id="3.4.21.92" evidence="1"/>
<dbReference type="EMBL" id="CP000926">
    <property type="protein sequence ID" value="ABY97805.1"/>
    <property type="molecule type" value="Genomic_DNA"/>
</dbReference>
<dbReference type="RefSeq" id="WP_012271562.1">
    <property type="nucleotide sequence ID" value="NC_010322.1"/>
</dbReference>
<dbReference type="SMR" id="B0KJG6"/>
<dbReference type="MEROPS" id="S14.001"/>
<dbReference type="GeneID" id="45524997"/>
<dbReference type="KEGG" id="ppg:PputGB1_1902"/>
<dbReference type="eggNOG" id="COG0740">
    <property type="taxonomic scope" value="Bacteria"/>
</dbReference>
<dbReference type="HOGENOM" id="CLU_058707_3_2_6"/>
<dbReference type="Proteomes" id="UP000002157">
    <property type="component" value="Chromosome"/>
</dbReference>
<dbReference type="GO" id="GO:0005737">
    <property type="term" value="C:cytoplasm"/>
    <property type="evidence" value="ECO:0007669"/>
    <property type="project" value="UniProtKB-SubCell"/>
</dbReference>
<dbReference type="GO" id="GO:0009368">
    <property type="term" value="C:endopeptidase Clp complex"/>
    <property type="evidence" value="ECO:0007669"/>
    <property type="project" value="TreeGrafter"/>
</dbReference>
<dbReference type="GO" id="GO:0004176">
    <property type="term" value="F:ATP-dependent peptidase activity"/>
    <property type="evidence" value="ECO:0007669"/>
    <property type="project" value="InterPro"/>
</dbReference>
<dbReference type="GO" id="GO:0051117">
    <property type="term" value="F:ATPase binding"/>
    <property type="evidence" value="ECO:0007669"/>
    <property type="project" value="TreeGrafter"/>
</dbReference>
<dbReference type="GO" id="GO:0004252">
    <property type="term" value="F:serine-type endopeptidase activity"/>
    <property type="evidence" value="ECO:0007669"/>
    <property type="project" value="UniProtKB-UniRule"/>
</dbReference>
<dbReference type="GO" id="GO:0006515">
    <property type="term" value="P:protein quality control for misfolded or incompletely synthesized proteins"/>
    <property type="evidence" value="ECO:0007669"/>
    <property type="project" value="TreeGrafter"/>
</dbReference>
<dbReference type="CDD" id="cd07017">
    <property type="entry name" value="S14_ClpP_2"/>
    <property type="match status" value="1"/>
</dbReference>
<dbReference type="FunFam" id="3.90.226.10:FF:000001">
    <property type="entry name" value="ATP-dependent Clp protease proteolytic subunit"/>
    <property type="match status" value="1"/>
</dbReference>
<dbReference type="Gene3D" id="3.90.226.10">
    <property type="entry name" value="2-enoyl-CoA Hydratase, Chain A, domain 1"/>
    <property type="match status" value="1"/>
</dbReference>
<dbReference type="HAMAP" id="MF_00444">
    <property type="entry name" value="ClpP"/>
    <property type="match status" value="1"/>
</dbReference>
<dbReference type="InterPro" id="IPR001907">
    <property type="entry name" value="ClpP"/>
</dbReference>
<dbReference type="InterPro" id="IPR029045">
    <property type="entry name" value="ClpP/crotonase-like_dom_sf"/>
</dbReference>
<dbReference type="InterPro" id="IPR023562">
    <property type="entry name" value="ClpP/TepA"/>
</dbReference>
<dbReference type="InterPro" id="IPR033135">
    <property type="entry name" value="ClpP_His_AS"/>
</dbReference>
<dbReference type="InterPro" id="IPR018215">
    <property type="entry name" value="ClpP_Ser_AS"/>
</dbReference>
<dbReference type="NCBIfam" id="TIGR00493">
    <property type="entry name" value="clpP"/>
    <property type="match status" value="1"/>
</dbReference>
<dbReference type="NCBIfam" id="NF001368">
    <property type="entry name" value="PRK00277.1"/>
    <property type="match status" value="1"/>
</dbReference>
<dbReference type="NCBIfam" id="NF009205">
    <property type="entry name" value="PRK12553.1"/>
    <property type="match status" value="1"/>
</dbReference>
<dbReference type="PANTHER" id="PTHR10381">
    <property type="entry name" value="ATP-DEPENDENT CLP PROTEASE PROTEOLYTIC SUBUNIT"/>
    <property type="match status" value="1"/>
</dbReference>
<dbReference type="PANTHER" id="PTHR10381:SF70">
    <property type="entry name" value="ATP-DEPENDENT CLP PROTEASE PROTEOLYTIC SUBUNIT"/>
    <property type="match status" value="1"/>
</dbReference>
<dbReference type="Pfam" id="PF00574">
    <property type="entry name" value="CLP_protease"/>
    <property type="match status" value="1"/>
</dbReference>
<dbReference type="PRINTS" id="PR00127">
    <property type="entry name" value="CLPPROTEASEP"/>
</dbReference>
<dbReference type="SUPFAM" id="SSF52096">
    <property type="entry name" value="ClpP/crotonase"/>
    <property type="match status" value="1"/>
</dbReference>
<dbReference type="PROSITE" id="PS00382">
    <property type="entry name" value="CLP_PROTEASE_HIS"/>
    <property type="match status" value="1"/>
</dbReference>
<dbReference type="PROSITE" id="PS00381">
    <property type="entry name" value="CLP_PROTEASE_SER"/>
    <property type="match status" value="1"/>
</dbReference>
<reference key="1">
    <citation type="submission" date="2008-01" db="EMBL/GenBank/DDBJ databases">
        <title>Complete sequence of Pseudomonas putida GB-1.</title>
        <authorList>
            <consortium name="US DOE Joint Genome Institute"/>
            <person name="Copeland A."/>
            <person name="Lucas S."/>
            <person name="Lapidus A."/>
            <person name="Barry K."/>
            <person name="Glavina del Rio T."/>
            <person name="Dalin E."/>
            <person name="Tice H."/>
            <person name="Pitluck S."/>
            <person name="Bruce D."/>
            <person name="Goodwin L."/>
            <person name="Chertkov O."/>
            <person name="Brettin T."/>
            <person name="Detter J.C."/>
            <person name="Han C."/>
            <person name="Kuske C.R."/>
            <person name="Schmutz J."/>
            <person name="Larimer F."/>
            <person name="Land M."/>
            <person name="Hauser L."/>
            <person name="Kyrpides N."/>
            <person name="Kim E."/>
            <person name="McCarthy J.K."/>
            <person name="Richardson P."/>
        </authorList>
    </citation>
    <scope>NUCLEOTIDE SEQUENCE [LARGE SCALE GENOMIC DNA]</scope>
    <source>
        <strain>GB-1</strain>
    </source>
</reference>
<comment type="function">
    <text evidence="1">Cleaves peptides in various proteins in a process that requires ATP hydrolysis. Has a chymotrypsin-like activity. Plays a major role in the degradation of misfolded proteins.</text>
</comment>
<comment type="catalytic activity">
    <reaction evidence="1">
        <text>Hydrolysis of proteins to small peptides in the presence of ATP and magnesium. alpha-casein is the usual test substrate. In the absence of ATP, only oligopeptides shorter than five residues are hydrolyzed (such as succinyl-Leu-Tyr-|-NHMec, and Leu-Tyr-Leu-|-Tyr-Trp, in which cleavage of the -Tyr-|-Leu- and -Tyr-|-Trp bonds also occurs).</text>
        <dbReference type="EC" id="3.4.21.92"/>
    </reaction>
</comment>
<comment type="subunit">
    <text evidence="1">Fourteen ClpP subunits assemble into 2 heptameric rings which stack back to back to give a disk-like structure with a central cavity, resembling the structure of eukaryotic proteasomes.</text>
</comment>
<comment type="subcellular location">
    <subcellularLocation>
        <location evidence="1">Cytoplasm</location>
    </subcellularLocation>
</comment>
<comment type="similarity">
    <text evidence="1">Belongs to the peptidase S14 family.</text>
</comment>
<evidence type="ECO:0000255" key="1">
    <source>
        <dbReference type="HAMAP-Rule" id="MF_00444"/>
    </source>
</evidence>
<accession>B0KJG6</accession>
<keyword id="KW-0963">Cytoplasm</keyword>
<keyword id="KW-0378">Hydrolase</keyword>
<keyword id="KW-0645">Protease</keyword>
<keyword id="KW-0720">Serine protease</keyword>
<organism>
    <name type="scientific">Pseudomonas putida (strain GB-1)</name>
    <dbReference type="NCBI Taxonomy" id="76869"/>
    <lineage>
        <taxon>Bacteria</taxon>
        <taxon>Pseudomonadati</taxon>
        <taxon>Pseudomonadota</taxon>
        <taxon>Gammaproteobacteria</taxon>
        <taxon>Pseudomonadales</taxon>
        <taxon>Pseudomonadaceae</taxon>
        <taxon>Pseudomonas</taxon>
    </lineage>
</organism>
<feature type="chain" id="PRO_1000080897" description="ATP-dependent Clp protease proteolytic subunit">
    <location>
        <begin position="1"/>
        <end position="213"/>
    </location>
</feature>
<feature type="active site" description="Nucleophile" evidence="1">
    <location>
        <position position="114"/>
    </location>
</feature>
<feature type="active site" evidence="1">
    <location>
        <position position="139"/>
    </location>
</feature>
<name>CLPP_PSEPG</name>